<organism>
    <name type="scientific">Photobacterium profundum (strain SS9)</name>
    <dbReference type="NCBI Taxonomy" id="298386"/>
    <lineage>
        <taxon>Bacteria</taxon>
        <taxon>Pseudomonadati</taxon>
        <taxon>Pseudomonadota</taxon>
        <taxon>Gammaproteobacteria</taxon>
        <taxon>Vibrionales</taxon>
        <taxon>Vibrionaceae</taxon>
        <taxon>Photobacterium</taxon>
    </lineage>
</organism>
<dbReference type="EC" id="4.2.1.33" evidence="1"/>
<dbReference type="EMBL" id="CR378664">
    <property type="protein sequence ID" value="CAG18849.1"/>
    <property type="status" value="ALT_INIT"/>
    <property type="molecule type" value="Genomic_DNA"/>
</dbReference>
<dbReference type="RefSeq" id="WP_041393861.1">
    <property type="nucleotide sequence ID" value="NC_006370.1"/>
</dbReference>
<dbReference type="SMR" id="Q6LV26"/>
<dbReference type="STRING" id="298386.PBPRA0417"/>
<dbReference type="KEGG" id="ppr:PBPRA0417"/>
<dbReference type="eggNOG" id="COG0065">
    <property type="taxonomic scope" value="Bacteria"/>
</dbReference>
<dbReference type="HOGENOM" id="CLU_006714_3_4_6"/>
<dbReference type="UniPathway" id="UPA00048">
    <property type="reaction ID" value="UER00071"/>
</dbReference>
<dbReference type="Proteomes" id="UP000000593">
    <property type="component" value="Chromosome 1"/>
</dbReference>
<dbReference type="GO" id="GO:0003861">
    <property type="term" value="F:3-isopropylmalate dehydratase activity"/>
    <property type="evidence" value="ECO:0007669"/>
    <property type="project" value="UniProtKB-UniRule"/>
</dbReference>
<dbReference type="GO" id="GO:0051539">
    <property type="term" value="F:4 iron, 4 sulfur cluster binding"/>
    <property type="evidence" value="ECO:0007669"/>
    <property type="project" value="UniProtKB-KW"/>
</dbReference>
<dbReference type="GO" id="GO:0046872">
    <property type="term" value="F:metal ion binding"/>
    <property type="evidence" value="ECO:0007669"/>
    <property type="project" value="UniProtKB-KW"/>
</dbReference>
<dbReference type="GO" id="GO:0009098">
    <property type="term" value="P:L-leucine biosynthetic process"/>
    <property type="evidence" value="ECO:0007669"/>
    <property type="project" value="UniProtKB-UniRule"/>
</dbReference>
<dbReference type="CDD" id="cd01583">
    <property type="entry name" value="IPMI"/>
    <property type="match status" value="1"/>
</dbReference>
<dbReference type="FunFam" id="3.30.499.10:FF:000006">
    <property type="entry name" value="3-isopropylmalate dehydratase large subunit"/>
    <property type="match status" value="1"/>
</dbReference>
<dbReference type="FunFam" id="3.30.499.10:FF:000007">
    <property type="entry name" value="3-isopropylmalate dehydratase large subunit"/>
    <property type="match status" value="1"/>
</dbReference>
<dbReference type="Gene3D" id="3.30.499.10">
    <property type="entry name" value="Aconitase, domain 3"/>
    <property type="match status" value="2"/>
</dbReference>
<dbReference type="HAMAP" id="MF_01026">
    <property type="entry name" value="LeuC_type1"/>
    <property type="match status" value="1"/>
</dbReference>
<dbReference type="InterPro" id="IPR004430">
    <property type="entry name" value="3-IsopropMal_deHydase_lsu"/>
</dbReference>
<dbReference type="InterPro" id="IPR015931">
    <property type="entry name" value="Acnase/IPM_dHydase_lsu_aba_1/3"/>
</dbReference>
<dbReference type="InterPro" id="IPR001030">
    <property type="entry name" value="Acoase/IPM_deHydtase_lsu_aba"/>
</dbReference>
<dbReference type="InterPro" id="IPR018136">
    <property type="entry name" value="Aconitase_4Fe-4S_BS"/>
</dbReference>
<dbReference type="InterPro" id="IPR036008">
    <property type="entry name" value="Aconitase_4Fe-4S_dom"/>
</dbReference>
<dbReference type="InterPro" id="IPR050067">
    <property type="entry name" value="IPM_dehydratase_rel_enz"/>
</dbReference>
<dbReference type="InterPro" id="IPR033941">
    <property type="entry name" value="IPMI_cat"/>
</dbReference>
<dbReference type="NCBIfam" id="TIGR00170">
    <property type="entry name" value="leuC"/>
    <property type="match status" value="1"/>
</dbReference>
<dbReference type="NCBIfam" id="NF004016">
    <property type="entry name" value="PRK05478.1"/>
    <property type="match status" value="1"/>
</dbReference>
<dbReference type="NCBIfam" id="NF009116">
    <property type="entry name" value="PRK12466.1"/>
    <property type="match status" value="1"/>
</dbReference>
<dbReference type="PANTHER" id="PTHR43822:SF9">
    <property type="entry name" value="3-ISOPROPYLMALATE DEHYDRATASE"/>
    <property type="match status" value="1"/>
</dbReference>
<dbReference type="PANTHER" id="PTHR43822">
    <property type="entry name" value="HOMOACONITASE, MITOCHONDRIAL-RELATED"/>
    <property type="match status" value="1"/>
</dbReference>
<dbReference type="Pfam" id="PF00330">
    <property type="entry name" value="Aconitase"/>
    <property type="match status" value="1"/>
</dbReference>
<dbReference type="PRINTS" id="PR00415">
    <property type="entry name" value="ACONITASE"/>
</dbReference>
<dbReference type="SUPFAM" id="SSF53732">
    <property type="entry name" value="Aconitase iron-sulfur domain"/>
    <property type="match status" value="1"/>
</dbReference>
<dbReference type="PROSITE" id="PS00450">
    <property type="entry name" value="ACONITASE_1"/>
    <property type="match status" value="1"/>
</dbReference>
<dbReference type="PROSITE" id="PS01244">
    <property type="entry name" value="ACONITASE_2"/>
    <property type="match status" value="1"/>
</dbReference>
<comment type="function">
    <text evidence="1">Catalyzes the isomerization between 2-isopropylmalate and 3-isopropylmalate, via the formation of 2-isopropylmaleate.</text>
</comment>
<comment type="catalytic activity">
    <reaction evidence="1">
        <text>(2R,3S)-3-isopropylmalate = (2S)-2-isopropylmalate</text>
        <dbReference type="Rhea" id="RHEA:32287"/>
        <dbReference type="ChEBI" id="CHEBI:1178"/>
        <dbReference type="ChEBI" id="CHEBI:35121"/>
        <dbReference type="EC" id="4.2.1.33"/>
    </reaction>
</comment>
<comment type="cofactor">
    <cofactor evidence="1">
        <name>[4Fe-4S] cluster</name>
        <dbReference type="ChEBI" id="CHEBI:49883"/>
    </cofactor>
    <text evidence="1">Binds 1 [4Fe-4S] cluster per subunit.</text>
</comment>
<comment type="pathway">
    <text evidence="1">Amino-acid biosynthesis; L-leucine biosynthesis; L-leucine from 3-methyl-2-oxobutanoate: step 2/4.</text>
</comment>
<comment type="subunit">
    <text evidence="1">Heterodimer of LeuC and LeuD.</text>
</comment>
<comment type="similarity">
    <text evidence="1">Belongs to the aconitase/IPM isomerase family. LeuC type 1 subfamily.</text>
</comment>
<comment type="sequence caution" evidence="2">
    <conflict type="erroneous initiation">
        <sequence resource="EMBL-CDS" id="CAG18849"/>
    </conflict>
</comment>
<protein>
    <recommendedName>
        <fullName evidence="1">3-isopropylmalate dehydratase large subunit</fullName>
        <ecNumber evidence="1">4.2.1.33</ecNumber>
    </recommendedName>
    <alternativeName>
        <fullName evidence="1">Alpha-IPM isomerase</fullName>
        <shortName evidence="1">IPMI</shortName>
    </alternativeName>
    <alternativeName>
        <fullName evidence="1">Isopropylmalate isomerase</fullName>
    </alternativeName>
</protein>
<proteinExistence type="inferred from homology"/>
<name>LEUC_PHOPR</name>
<accession>Q6LV26</accession>
<gene>
    <name evidence="1" type="primary">leuC</name>
    <name type="ordered locus">PBPRA0417</name>
</gene>
<evidence type="ECO:0000255" key="1">
    <source>
        <dbReference type="HAMAP-Rule" id="MF_01026"/>
    </source>
</evidence>
<evidence type="ECO:0000305" key="2"/>
<keyword id="KW-0004">4Fe-4S</keyword>
<keyword id="KW-0028">Amino-acid biosynthesis</keyword>
<keyword id="KW-0100">Branched-chain amino acid biosynthesis</keyword>
<keyword id="KW-0408">Iron</keyword>
<keyword id="KW-0411">Iron-sulfur</keyword>
<keyword id="KW-0432">Leucine biosynthesis</keyword>
<keyword id="KW-0456">Lyase</keyword>
<keyword id="KW-0479">Metal-binding</keyword>
<keyword id="KW-1185">Reference proteome</keyword>
<sequence length="476" mass="50990">MSAKTGTSKTLYEKVYDAHVAVAAEGENPILYIDRHLVHEVTSPQAFDGLREKGRKVRQIGKTFATMDHNVSTQTKDINASGEMARIQMETLAKNCKEFGVTLYDLNHKYQGIVHVIGPELGITLPGMTIVCGDSHTATHGAFGSLAFGIGTSEVEHVLATQTLKQSLAKTMKIEVVGKVAEGITAKDIVLAIIGKTTAAGGTGYVVEFCGEAITDLTMEGRMTVCNMAIELGAKAGLIAPDQTTYDYIKDRKFSPTGANFDAAVEYWSTLKTDDGATFDAVVTLDAKNIKPQVTWGTNPGQVIAIDELIPGPDNFSEQVDKTSAEKALAYMGLEAGKKLSDFDIDKVFIGSCTNSRIEDMRAAAAIAKGRKVAANVQALVVPGSEQVKAQAEKEGLDKIFIEAGFEWRLPGCSMCLAMNNDRLGPKERCASTSNRNFEGRQGRDGRTHLVSPAMAAAAACAGHFVDIRDLDNATA</sequence>
<reference key="1">
    <citation type="journal article" date="2005" name="Science">
        <title>Life at depth: Photobacterium profundum genome sequence and expression analysis.</title>
        <authorList>
            <person name="Vezzi A."/>
            <person name="Campanaro S."/>
            <person name="D'Angelo M."/>
            <person name="Simonato F."/>
            <person name="Vitulo N."/>
            <person name="Lauro F.M."/>
            <person name="Cestaro A."/>
            <person name="Malacrida G."/>
            <person name="Simionati B."/>
            <person name="Cannata N."/>
            <person name="Romualdi C."/>
            <person name="Bartlett D.H."/>
            <person name="Valle G."/>
        </authorList>
    </citation>
    <scope>NUCLEOTIDE SEQUENCE [LARGE SCALE GENOMIC DNA]</scope>
    <source>
        <strain>ATCC BAA-1253 / SS9</strain>
    </source>
</reference>
<feature type="chain" id="PRO_0000076777" description="3-isopropylmalate dehydratase large subunit">
    <location>
        <begin position="1"/>
        <end position="476"/>
    </location>
</feature>
<feature type="binding site" evidence="1">
    <location>
        <position position="353"/>
    </location>
    <ligand>
        <name>[4Fe-4S] cluster</name>
        <dbReference type="ChEBI" id="CHEBI:49883"/>
    </ligand>
</feature>
<feature type="binding site" evidence="1">
    <location>
        <position position="413"/>
    </location>
    <ligand>
        <name>[4Fe-4S] cluster</name>
        <dbReference type="ChEBI" id="CHEBI:49883"/>
    </ligand>
</feature>
<feature type="binding site" evidence="1">
    <location>
        <position position="416"/>
    </location>
    <ligand>
        <name>[4Fe-4S] cluster</name>
        <dbReference type="ChEBI" id="CHEBI:49883"/>
    </ligand>
</feature>